<protein>
    <recommendedName>
        <fullName>Cytochrome b</fullName>
    </recommendedName>
    <alternativeName>
        <fullName>Complex III subunit 3</fullName>
    </alternativeName>
    <alternativeName>
        <fullName>Complex III subunit III</fullName>
    </alternativeName>
    <alternativeName>
        <fullName>Cytochrome b-c1 complex subunit 3</fullName>
    </alternativeName>
    <alternativeName>
        <fullName>Ubiquinol-cytochrome-c reductase complex cytochrome b subunit</fullName>
    </alternativeName>
</protein>
<feature type="chain" id="PRO_0000060846" description="Cytochrome b">
    <location>
        <begin position="1"/>
        <end position="380"/>
    </location>
</feature>
<feature type="transmembrane region" description="Helical" evidence="2">
    <location>
        <begin position="34"/>
        <end position="54"/>
    </location>
</feature>
<feature type="transmembrane region" description="Helical" evidence="2">
    <location>
        <begin position="78"/>
        <end position="99"/>
    </location>
</feature>
<feature type="transmembrane region" description="Helical" evidence="2">
    <location>
        <begin position="114"/>
        <end position="134"/>
    </location>
</feature>
<feature type="transmembrane region" description="Helical" evidence="2">
    <location>
        <begin position="179"/>
        <end position="199"/>
    </location>
</feature>
<feature type="transmembrane region" description="Helical" evidence="2">
    <location>
        <begin position="227"/>
        <end position="247"/>
    </location>
</feature>
<feature type="transmembrane region" description="Helical" evidence="2">
    <location>
        <begin position="289"/>
        <end position="309"/>
    </location>
</feature>
<feature type="transmembrane region" description="Helical" evidence="2">
    <location>
        <begin position="321"/>
        <end position="341"/>
    </location>
</feature>
<feature type="transmembrane region" description="Helical" evidence="2">
    <location>
        <begin position="348"/>
        <end position="368"/>
    </location>
</feature>
<feature type="binding site" description="axial binding residue" evidence="2">
    <location>
        <position position="84"/>
    </location>
    <ligand>
        <name>heme b</name>
        <dbReference type="ChEBI" id="CHEBI:60344"/>
        <label>b562</label>
    </ligand>
    <ligandPart>
        <name>Fe</name>
        <dbReference type="ChEBI" id="CHEBI:18248"/>
    </ligandPart>
</feature>
<feature type="binding site" description="axial binding residue" evidence="2">
    <location>
        <position position="98"/>
    </location>
    <ligand>
        <name>heme b</name>
        <dbReference type="ChEBI" id="CHEBI:60344"/>
        <label>b566</label>
    </ligand>
    <ligandPart>
        <name>Fe</name>
        <dbReference type="ChEBI" id="CHEBI:18248"/>
    </ligandPart>
</feature>
<feature type="binding site" description="axial binding residue" evidence="2">
    <location>
        <position position="183"/>
    </location>
    <ligand>
        <name>heme b</name>
        <dbReference type="ChEBI" id="CHEBI:60344"/>
        <label>b562</label>
    </ligand>
    <ligandPart>
        <name>Fe</name>
        <dbReference type="ChEBI" id="CHEBI:18248"/>
    </ligandPart>
</feature>
<feature type="binding site" description="axial binding residue" evidence="2">
    <location>
        <position position="197"/>
    </location>
    <ligand>
        <name>heme b</name>
        <dbReference type="ChEBI" id="CHEBI:60344"/>
        <label>b566</label>
    </ligand>
    <ligandPart>
        <name>Fe</name>
        <dbReference type="ChEBI" id="CHEBI:18248"/>
    </ligandPart>
</feature>
<feature type="binding site">
    <location>
        <position position="202"/>
    </location>
    <ligand>
        <name>a ubiquinone</name>
        <dbReference type="ChEBI" id="CHEBI:16389"/>
    </ligand>
</feature>
<keyword id="KW-0249">Electron transport</keyword>
<keyword id="KW-0349">Heme</keyword>
<keyword id="KW-0408">Iron</keyword>
<keyword id="KW-0472">Membrane</keyword>
<keyword id="KW-0479">Metal-binding</keyword>
<keyword id="KW-0496">Mitochondrion</keyword>
<keyword id="KW-0999">Mitochondrion inner membrane</keyword>
<keyword id="KW-0679">Respiratory chain</keyword>
<keyword id="KW-0812">Transmembrane</keyword>
<keyword id="KW-1133">Transmembrane helix</keyword>
<keyword id="KW-0813">Transport</keyword>
<keyword id="KW-0830">Ubiquinone</keyword>
<name>CYB_CYAST</name>
<dbReference type="EMBL" id="AY030113">
    <property type="protein sequence ID" value="AAK50156.1"/>
    <property type="molecule type" value="Genomic_DNA"/>
</dbReference>
<dbReference type="SMR" id="Q950C6"/>
<dbReference type="GO" id="GO:0005743">
    <property type="term" value="C:mitochondrial inner membrane"/>
    <property type="evidence" value="ECO:0007669"/>
    <property type="project" value="UniProtKB-SubCell"/>
</dbReference>
<dbReference type="GO" id="GO:0045275">
    <property type="term" value="C:respiratory chain complex III"/>
    <property type="evidence" value="ECO:0007669"/>
    <property type="project" value="InterPro"/>
</dbReference>
<dbReference type="GO" id="GO:0046872">
    <property type="term" value="F:metal ion binding"/>
    <property type="evidence" value="ECO:0007669"/>
    <property type="project" value="UniProtKB-KW"/>
</dbReference>
<dbReference type="GO" id="GO:0008121">
    <property type="term" value="F:ubiquinol-cytochrome-c reductase activity"/>
    <property type="evidence" value="ECO:0007669"/>
    <property type="project" value="InterPro"/>
</dbReference>
<dbReference type="GO" id="GO:0006122">
    <property type="term" value="P:mitochondrial electron transport, ubiquinol to cytochrome c"/>
    <property type="evidence" value="ECO:0007669"/>
    <property type="project" value="TreeGrafter"/>
</dbReference>
<dbReference type="CDD" id="cd00290">
    <property type="entry name" value="cytochrome_b_C"/>
    <property type="match status" value="1"/>
</dbReference>
<dbReference type="CDD" id="cd00284">
    <property type="entry name" value="Cytochrome_b_N"/>
    <property type="match status" value="1"/>
</dbReference>
<dbReference type="FunFam" id="1.20.810.10:FF:000002">
    <property type="entry name" value="Cytochrome b"/>
    <property type="match status" value="1"/>
</dbReference>
<dbReference type="Gene3D" id="1.20.810.10">
    <property type="entry name" value="Cytochrome Bc1 Complex, Chain C"/>
    <property type="match status" value="1"/>
</dbReference>
<dbReference type="InterPro" id="IPR005798">
    <property type="entry name" value="Cyt_b/b6_C"/>
</dbReference>
<dbReference type="InterPro" id="IPR036150">
    <property type="entry name" value="Cyt_b/b6_C_sf"/>
</dbReference>
<dbReference type="InterPro" id="IPR005797">
    <property type="entry name" value="Cyt_b/b6_N"/>
</dbReference>
<dbReference type="InterPro" id="IPR027387">
    <property type="entry name" value="Cytb/b6-like_sf"/>
</dbReference>
<dbReference type="InterPro" id="IPR030689">
    <property type="entry name" value="Cytochrome_b"/>
</dbReference>
<dbReference type="InterPro" id="IPR048260">
    <property type="entry name" value="Cytochrome_b_C_euk/bac"/>
</dbReference>
<dbReference type="InterPro" id="IPR048259">
    <property type="entry name" value="Cytochrome_b_N_euk/bac"/>
</dbReference>
<dbReference type="InterPro" id="IPR016174">
    <property type="entry name" value="Di-haem_cyt_TM"/>
</dbReference>
<dbReference type="PANTHER" id="PTHR19271">
    <property type="entry name" value="CYTOCHROME B"/>
    <property type="match status" value="1"/>
</dbReference>
<dbReference type="PANTHER" id="PTHR19271:SF16">
    <property type="entry name" value="CYTOCHROME B"/>
    <property type="match status" value="1"/>
</dbReference>
<dbReference type="Pfam" id="PF00032">
    <property type="entry name" value="Cytochrom_B_C"/>
    <property type="match status" value="1"/>
</dbReference>
<dbReference type="Pfam" id="PF00033">
    <property type="entry name" value="Cytochrome_B"/>
    <property type="match status" value="1"/>
</dbReference>
<dbReference type="PIRSF" id="PIRSF038885">
    <property type="entry name" value="COB"/>
    <property type="match status" value="1"/>
</dbReference>
<dbReference type="SUPFAM" id="SSF81648">
    <property type="entry name" value="a domain/subunit of cytochrome bc1 complex (Ubiquinol-cytochrome c reductase)"/>
    <property type="match status" value="1"/>
</dbReference>
<dbReference type="SUPFAM" id="SSF81342">
    <property type="entry name" value="Transmembrane di-heme cytochromes"/>
    <property type="match status" value="1"/>
</dbReference>
<dbReference type="PROSITE" id="PS51003">
    <property type="entry name" value="CYTB_CTER"/>
    <property type="match status" value="1"/>
</dbReference>
<dbReference type="PROSITE" id="PS51002">
    <property type="entry name" value="CYTB_NTER"/>
    <property type="match status" value="1"/>
</dbReference>
<reference key="1">
    <citation type="journal article" date="2001" name="Mol. Phylogenet. Evol.">
        <title>Higher-level phylogeny of New World vireos (Aves: Vireonidae) based on sequences of multiple mitochondrial DNA genes.</title>
        <authorList>
            <person name="Cicero C."/>
            <person name="Johnson N.K."/>
        </authorList>
    </citation>
    <scope>NUCLEOTIDE SEQUENCE [GENOMIC DNA]</scope>
    <source>
        <strain>Isolate MVZ 177328</strain>
    </source>
</reference>
<sequence length="380" mass="42484">MALNLRKNHPLLKIINDSLIDLPTPSNISAWWNFGSLLGICLITQIVTGLLLAMHYTADTSLAFASVAHVCRNVQFGWLIRNLHANGASFFFICIYLHIGRGFYYGSYLNKETWNIGVLLLLALMATAFVGYVLPWGQMSFWGATVITNLFSAIPYIGQTLVEWLWGGFSVDNPTLTRFFAFHFLLPFVIAGLTLVHLTFLHETGSNNPLGIPSDCDKIPFHPYYSIKDLLGFALMLIPFISLALFSPNLLGDPENFTPANPLATPPHIKPEWYFLFAYAILRSIPNKLGGVLALAASVLVLFLIPLLHVSKQRSMTFRPLSQILFWTLVADLLILTWVGSQPVEHPFIIIGQLASFAYFTIILILFPIVSALENKMLKL</sequence>
<organism>
    <name type="scientific">Cyanocitta stelleri</name>
    <name type="common">Steller's jay</name>
    <name type="synonym">Corvus stelleri</name>
    <dbReference type="NCBI Taxonomy" id="114083"/>
    <lineage>
        <taxon>Eukaryota</taxon>
        <taxon>Metazoa</taxon>
        <taxon>Chordata</taxon>
        <taxon>Craniata</taxon>
        <taxon>Vertebrata</taxon>
        <taxon>Euteleostomi</taxon>
        <taxon>Archelosauria</taxon>
        <taxon>Archosauria</taxon>
        <taxon>Dinosauria</taxon>
        <taxon>Saurischia</taxon>
        <taxon>Theropoda</taxon>
        <taxon>Coelurosauria</taxon>
        <taxon>Aves</taxon>
        <taxon>Neognathae</taxon>
        <taxon>Neoaves</taxon>
        <taxon>Telluraves</taxon>
        <taxon>Australaves</taxon>
        <taxon>Passeriformes</taxon>
        <taxon>Corvoidea</taxon>
        <taxon>Corvidae</taxon>
        <taxon>Cyanocitta</taxon>
    </lineage>
</organism>
<comment type="function">
    <text evidence="2">Component of the ubiquinol-cytochrome c reductase complex (complex III or cytochrome b-c1 complex) that is part of the mitochondrial respiratory chain. The b-c1 complex mediates electron transfer from ubiquinol to cytochrome c. Contributes to the generation of a proton gradient across the mitochondrial membrane that is then used for ATP synthesis.</text>
</comment>
<comment type="cofactor">
    <cofactor evidence="2">
        <name>heme b</name>
        <dbReference type="ChEBI" id="CHEBI:60344"/>
    </cofactor>
    <text evidence="2">Binds 2 heme b groups non-covalently.</text>
</comment>
<comment type="subunit">
    <text evidence="2">The cytochrome bc1 complex contains 11 subunits: 3 respiratory subunits (MT-CYB, CYC1 and UQCRFS1), 2 core proteins (UQCRC1 and UQCRC2) and 6 low-molecular weight proteins (UQCRH/QCR6, UQCRB/QCR7, UQCRQ/QCR8, UQCR10/QCR9, UQCR11/QCR10 and a cleavage product of UQCRFS1). This cytochrome bc1 complex then forms a dimer.</text>
</comment>
<comment type="subcellular location">
    <subcellularLocation>
        <location evidence="2">Mitochondrion inner membrane</location>
        <topology evidence="2">Multi-pass membrane protein</topology>
    </subcellularLocation>
</comment>
<comment type="miscellaneous">
    <text evidence="1">Heme 1 (or BL or b562) is low-potential and absorbs at about 562 nm, and heme 2 (or BH or b566) is high-potential and absorbs at about 566 nm.</text>
</comment>
<comment type="similarity">
    <text evidence="3 4">Belongs to the cytochrome b family.</text>
</comment>
<comment type="caution">
    <text evidence="2">The full-length protein contains only eight transmembrane helices, not nine as predicted by bioinformatics tools.</text>
</comment>
<evidence type="ECO:0000250" key="1"/>
<evidence type="ECO:0000250" key="2">
    <source>
        <dbReference type="UniProtKB" id="P00157"/>
    </source>
</evidence>
<evidence type="ECO:0000255" key="3">
    <source>
        <dbReference type="PROSITE-ProRule" id="PRU00967"/>
    </source>
</evidence>
<evidence type="ECO:0000255" key="4">
    <source>
        <dbReference type="PROSITE-ProRule" id="PRU00968"/>
    </source>
</evidence>
<proteinExistence type="inferred from homology"/>
<gene>
    <name type="primary">MT-CYB</name>
    <name type="synonym">COB</name>
    <name type="synonym">CYTB</name>
    <name type="synonym">MTCYB</name>
</gene>
<accession>Q950C6</accession>
<geneLocation type="mitochondrion"/>